<protein>
    <recommendedName>
        <fullName>Histone acetyltransferase GCN5</fullName>
        <ecNumber evidence="6">2.3.1.48</ecNumber>
    </recommendedName>
</protein>
<proteinExistence type="evidence at protein level"/>
<sequence length="511" mass="56685">MDGLAAPSPSHSGATSGGGASHRKRKLPPSSLSDATADEDDDTTAPSSPSTSPSSPSRPSSPSSSHSDDDDDDSLHTFTAARLDGAPPSSSGRPPKPESSTVSAAAAAAAAAAAPKPDSASAAAGDGKEDPKGLFTDNIQTSGAYSAREEGLKREEEAGRLKFLCYSNDGVDEHMIWLVGLKNIFARQLPNMPKEYIVRLVMDRTHKSMMVIRNNIVVGGITYRPYTSQKFGEIAFCAITADEQVKGYGTRLMNHLKQHARDADGLTHFLTYADNNAVGYFVKQGFTKEITLDKERWQGYIKDYDGGILMECRIDQKLPYVDLATMIRRQRQAIDEKIRELSNCHIVYSGIDFQKKEAGIPRRTMKPEDIQGLREAGWTPDQWGHSKSRSAFSPDYSTYRQQLTNLMRSLLKNMNEHPDAWPFKEPVDSRDVPDYYDIIKDPIDLKTMSKRVESEQYYVTLEMFVADMKRMFSNAKTYNSPDTIYYKCASRLESFFSNKVASQLAQASTKN</sequence>
<name>GCN5_ORYSJ</name>
<gene>
    <name type="primary">GCN5</name>
    <name type="ordered locus">Os10g0415900</name>
    <name type="ordered locus">LOC_Os10g28040</name>
</gene>
<comment type="function">
    <text evidence="1 6">Acetylates histones H3 and H4 in vitro (PubMed:28487409). Acetylates 'Lys-4' of histone H3 (H3K4ac), 'Lys-9' (H3K9ac), 'Lys-14' (H3K14ac), 'Lys-27' (H3K27ac), and 'Lys-5' of histone H4 (H4K5ac) (PubMed:28487409). Acetylation of histones gives a specific tag for epigenetic transcription activation (By similarity). Operates in concert with certain DNA-binding transcriptional activators (By similarity). ADA2 and GCN5 function to acetylate nucleosomes, opening up the promoter region (PubMed:28487409). The ADA2-GCN5 histone acetyltransferase (HAT) module is recruited by WOX11 to regulate crown root cell proliferation and stem cell maintenance of root meristem (PubMed:28487409). The ADA2-GCN5 HAT module together with WOX11 targets and regulates a set of root-specific genes involved in carbon metabolism, cell wall biosynthesis, and auxin transport and response (PubMed:28487409).</text>
</comment>
<comment type="catalytic activity">
    <reaction evidence="6">
        <text>L-lysyl-[protein] + acetyl-CoA = N(6)-acetyl-L-lysyl-[protein] + CoA + H(+)</text>
        <dbReference type="Rhea" id="RHEA:45948"/>
        <dbReference type="Rhea" id="RHEA-COMP:9752"/>
        <dbReference type="Rhea" id="RHEA-COMP:10731"/>
        <dbReference type="ChEBI" id="CHEBI:15378"/>
        <dbReference type="ChEBI" id="CHEBI:29969"/>
        <dbReference type="ChEBI" id="CHEBI:57287"/>
        <dbReference type="ChEBI" id="CHEBI:57288"/>
        <dbReference type="ChEBI" id="CHEBI:61930"/>
        <dbReference type="EC" id="2.3.1.48"/>
    </reaction>
    <physiologicalReaction direction="left-to-right" evidence="6">
        <dbReference type="Rhea" id="RHEA:45949"/>
    </physiologicalReaction>
</comment>
<comment type="subunit">
    <text evidence="6">Interacts with ADA2.</text>
</comment>
<comment type="subcellular location">
    <subcellularLocation>
        <location evidence="7">Nucleus</location>
    </subcellularLocation>
</comment>
<comment type="tissue specificity">
    <text evidence="6">Expressed in roots, mature leaves, stems and panicles.</text>
</comment>
<comment type="similarity">
    <text evidence="7">Belongs to the acetyltransferase family. GCN5 subfamily.</text>
</comment>
<organism>
    <name type="scientific">Oryza sativa subsp. japonica</name>
    <name type="common">Rice</name>
    <dbReference type="NCBI Taxonomy" id="39947"/>
    <lineage>
        <taxon>Eukaryota</taxon>
        <taxon>Viridiplantae</taxon>
        <taxon>Streptophyta</taxon>
        <taxon>Embryophyta</taxon>
        <taxon>Tracheophyta</taxon>
        <taxon>Spermatophyta</taxon>
        <taxon>Magnoliopsida</taxon>
        <taxon>Liliopsida</taxon>
        <taxon>Poales</taxon>
        <taxon>Poaceae</taxon>
        <taxon>BOP clade</taxon>
        <taxon>Oryzoideae</taxon>
        <taxon>Oryzeae</taxon>
        <taxon>Oryzinae</taxon>
        <taxon>Oryza</taxon>
        <taxon>Oryza sativa</taxon>
    </lineage>
</organism>
<accession>Q338B9</accession>
<accession>B7F469</accession>
<evidence type="ECO:0000250" key="1">
    <source>
        <dbReference type="UniProtKB" id="Q03330"/>
    </source>
</evidence>
<evidence type="ECO:0000250" key="2">
    <source>
        <dbReference type="UniProtKB" id="Q92830"/>
    </source>
</evidence>
<evidence type="ECO:0000255" key="3">
    <source>
        <dbReference type="PROSITE-ProRule" id="PRU00035"/>
    </source>
</evidence>
<evidence type="ECO:0000255" key="4">
    <source>
        <dbReference type="PROSITE-ProRule" id="PRU00532"/>
    </source>
</evidence>
<evidence type="ECO:0000256" key="5">
    <source>
        <dbReference type="SAM" id="MobiDB-lite"/>
    </source>
</evidence>
<evidence type="ECO:0000269" key="6">
    <source>
    </source>
</evidence>
<evidence type="ECO:0000305" key="7"/>
<dbReference type="EC" id="2.3.1.48" evidence="6"/>
<dbReference type="EMBL" id="DP000086">
    <property type="protein sequence ID" value="ABB47615.1"/>
    <property type="molecule type" value="Genomic_DNA"/>
</dbReference>
<dbReference type="EMBL" id="AP008216">
    <property type="protein sequence ID" value="BAF26518.1"/>
    <property type="molecule type" value="Genomic_DNA"/>
</dbReference>
<dbReference type="EMBL" id="AP014966">
    <property type="protein sequence ID" value="BAT10851.1"/>
    <property type="molecule type" value="Genomic_DNA"/>
</dbReference>
<dbReference type="EMBL" id="AK111779">
    <property type="protein sequence ID" value="BAG99416.1"/>
    <property type="molecule type" value="mRNA"/>
</dbReference>
<dbReference type="RefSeq" id="XP_015614202.1">
    <property type="nucleotide sequence ID" value="XM_015758716.1"/>
</dbReference>
<dbReference type="SMR" id="Q338B9"/>
<dbReference type="FunCoup" id="Q338B9">
    <property type="interactions" value="667"/>
</dbReference>
<dbReference type="STRING" id="39947.Q338B9"/>
<dbReference type="PaxDb" id="39947-Q338B9"/>
<dbReference type="EnsemblPlants" id="Os10t0415900-01">
    <property type="protein sequence ID" value="Os10t0415900-01"/>
    <property type="gene ID" value="Os10g0415900"/>
</dbReference>
<dbReference type="Gramene" id="Os10t0415900-01">
    <property type="protein sequence ID" value="Os10t0415900-01"/>
    <property type="gene ID" value="Os10g0415900"/>
</dbReference>
<dbReference type="KEGG" id="dosa:Os10g0415900"/>
<dbReference type="eggNOG" id="KOG1472">
    <property type="taxonomic scope" value="Eukaryota"/>
</dbReference>
<dbReference type="HOGENOM" id="CLU_015741_5_0_1"/>
<dbReference type="InParanoid" id="Q338B9"/>
<dbReference type="OMA" id="HQPPKEW"/>
<dbReference type="OrthoDB" id="1937912at2759"/>
<dbReference type="Proteomes" id="UP000000763">
    <property type="component" value="Chromosome 10"/>
</dbReference>
<dbReference type="Proteomes" id="UP000059680">
    <property type="component" value="Chromosome 10"/>
</dbReference>
<dbReference type="GO" id="GO:0000123">
    <property type="term" value="C:histone acetyltransferase complex"/>
    <property type="evidence" value="ECO:0000318"/>
    <property type="project" value="GO_Central"/>
</dbReference>
<dbReference type="GO" id="GO:0005634">
    <property type="term" value="C:nucleus"/>
    <property type="evidence" value="ECO:0007669"/>
    <property type="project" value="UniProtKB-SubCell"/>
</dbReference>
<dbReference type="GO" id="GO:0003677">
    <property type="term" value="F:DNA binding"/>
    <property type="evidence" value="ECO:0007669"/>
    <property type="project" value="EnsemblPlants"/>
</dbReference>
<dbReference type="GO" id="GO:0010484">
    <property type="term" value="F:histone H3 acetyltransferase activity"/>
    <property type="evidence" value="ECO:0000314"/>
    <property type="project" value="UniProtKB"/>
</dbReference>
<dbReference type="GO" id="GO:0010485">
    <property type="term" value="F:histone H4 acetyltransferase activity"/>
    <property type="evidence" value="ECO:0000314"/>
    <property type="project" value="UniProtKB"/>
</dbReference>
<dbReference type="GO" id="GO:0006338">
    <property type="term" value="P:chromatin remodeling"/>
    <property type="evidence" value="ECO:0000318"/>
    <property type="project" value="GO_Central"/>
</dbReference>
<dbReference type="GO" id="GO:0009908">
    <property type="term" value="P:flower development"/>
    <property type="evidence" value="ECO:0007669"/>
    <property type="project" value="EnsemblPlants"/>
</dbReference>
<dbReference type="GO" id="GO:0045944">
    <property type="term" value="P:positive regulation of transcription by RNA polymerase II"/>
    <property type="evidence" value="ECO:0000318"/>
    <property type="project" value="GO_Central"/>
</dbReference>
<dbReference type="GO" id="GO:1904278">
    <property type="term" value="P:positive regulation of wax biosynthetic process"/>
    <property type="evidence" value="ECO:0007669"/>
    <property type="project" value="EnsemblPlants"/>
</dbReference>
<dbReference type="GO" id="GO:0010321">
    <property type="term" value="P:regulation of vegetative phase change"/>
    <property type="evidence" value="ECO:0007669"/>
    <property type="project" value="EnsemblPlants"/>
</dbReference>
<dbReference type="GO" id="GO:0009416">
    <property type="term" value="P:response to light stimulus"/>
    <property type="evidence" value="ECO:0007669"/>
    <property type="project" value="EnsemblPlants"/>
</dbReference>
<dbReference type="GO" id="GO:0010015">
    <property type="term" value="P:root morphogenesis"/>
    <property type="evidence" value="ECO:0000315"/>
    <property type="project" value="UniProtKB"/>
</dbReference>
<dbReference type="GO" id="GO:0140673">
    <property type="term" value="P:transcription elongation-coupled chromatin remodeling"/>
    <property type="evidence" value="ECO:0000314"/>
    <property type="project" value="UniProtKB"/>
</dbReference>
<dbReference type="CDD" id="cd05509">
    <property type="entry name" value="Bromo_gcn5_like"/>
    <property type="match status" value="1"/>
</dbReference>
<dbReference type="CDD" id="cd04301">
    <property type="entry name" value="NAT_SF"/>
    <property type="match status" value="1"/>
</dbReference>
<dbReference type="FunFam" id="3.40.630.30:FF:000004">
    <property type="entry name" value="Histone acetyltransferase KAT2A"/>
    <property type="match status" value="1"/>
</dbReference>
<dbReference type="Gene3D" id="3.40.630.30">
    <property type="match status" value="1"/>
</dbReference>
<dbReference type="Gene3D" id="1.20.920.10">
    <property type="entry name" value="Bromodomain-like"/>
    <property type="match status" value="1"/>
</dbReference>
<dbReference type="InterPro" id="IPR016181">
    <property type="entry name" value="Acyl_CoA_acyltransferase"/>
</dbReference>
<dbReference type="InterPro" id="IPR001487">
    <property type="entry name" value="Bromodomain"/>
</dbReference>
<dbReference type="InterPro" id="IPR036427">
    <property type="entry name" value="Bromodomain-like_sf"/>
</dbReference>
<dbReference type="InterPro" id="IPR018359">
    <property type="entry name" value="Bromodomain_CS"/>
</dbReference>
<dbReference type="InterPro" id="IPR037800">
    <property type="entry name" value="GCN5"/>
</dbReference>
<dbReference type="InterPro" id="IPR000182">
    <property type="entry name" value="GNAT_dom"/>
</dbReference>
<dbReference type="PANTHER" id="PTHR45750">
    <property type="entry name" value="GH11602P"/>
    <property type="match status" value="1"/>
</dbReference>
<dbReference type="PANTHER" id="PTHR45750:SF3">
    <property type="entry name" value="HISTONE ACETYLTRANSFERASE"/>
    <property type="match status" value="1"/>
</dbReference>
<dbReference type="Pfam" id="PF00583">
    <property type="entry name" value="Acetyltransf_1"/>
    <property type="match status" value="1"/>
</dbReference>
<dbReference type="Pfam" id="PF00439">
    <property type="entry name" value="Bromodomain"/>
    <property type="match status" value="1"/>
</dbReference>
<dbReference type="PRINTS" id="PR00503">
    <property type="entry name" value="BROMODOMAIN"/>
</dbReference>
<dbReference type="SMART" id="SM00297">
    <property type="entry name" value="BROMO"/>
    <property type="match status" value="1"/>
</dbReference>
<dbReference type="SUPFAM" id="SSF55729">
    <property type="entry name" value="Acyl-CoA N-acyltransferases (Nat)"/>
    <property type="match status" value="1"/>
</dbReference>
<dbReference type="SUPFAM" id="SSF47370">
    <property type="entry name" value="Bromodomain"/>
    <property type="match status" value="1"/>
</dbReference>
<dbReference type="PROSITE" id="PS00633">
    <property type="entry name" value="BROMODOMAIN_1"/>
    <property type="match status" value="1"/>
</dbReference>
<dbReference type="PROSITE" id="PS50014">
    <property type="entry name" value="BROMODOMAIN_2"/>
    <property type="match status" value="1"/>
</dbReference>
<dbReference type="PROSITE" id="PS51186">
    <property type="entry name" value="GNAT"/>
    <property type="match status" value="1"/>
</dbReference>
<feature type="chain" id="PRO_0000269749" description="Histone acetyltransferase GCN5">
    <location>
        <begin position="1"/>
        <end position="511"/>
    </location>
</feature>
<feature type="domain" description="N-acetyltransferase" evidence="4">
    <location>
        <begin position="168"/>
        <end position="315"/>
    </location>
</feature>
<feature type="domain" description="Bromo" evidence="3">
    <location>
        <begin position="398"/>
        <end position="503"/>
    </location>
</feature>
<feature type="region of interest" description="Disordered" evidence="5">
    <location>
        <begin position="1"/>
        <end position="152"/>
    </location>
</feature>
<feature type="compositionally biased region" description="Low complexity" evidence="5">
    <location>
        <begin position="1"/>
        <end position="14"/>
    </location>
</feature>
<feature type="compositionally biased region" description="Low complexity" evidence="5">
    <location>
        <begin position="44"/>
        <end position="65"/>
    </location>
</feature>
<feature type="compositionally biased region" description="Polar residues" evidence="5">
    <location>
        <begin position="88"/>
        <end position="103"/>
    </location>
</feature>
<feature type="compositionally biased region" description="Low complexity" evidence="5">
    <location>
        <begin position="104"/>
        <end position="125"/>
    </location>
</feature>
<feature type="active site" description="Proton donor/acceptor" evidence="2">
    <location>
        <position position="233"/>
    </location>
</feature>
<feature type="binding site" evidence="2">
    <location>
        <begin position="237"/>
        <end position="239"/>
    </location>
    <ligand>
        <name>acetyl-CoA</name>
        <dbReference type="ChEBI" id="CHEBI:57288"/>
    </ligand>
</feature>
<feature type="binding site" evidence="2">
    <location>
        <begin position="244"/>
        <end position="250"/>
    </location>
    <ligand>
        <name>acetyl-CoA</name>
        <dbReference type="ChEBI" id="CHEBI:57288"/>
    </ligand>
</feature>
<feature type="binding site" evidence="2">
    <location>
        <begin position="276"/>
        <end position="279"/>
    </location>
    <ligand>
        <name>acetyl-CoA</name>
        <dbReference type="ChEBI" id="CHEBI:57288"/>
    </ligand>
</feature>
<reference key="1">
    <citation type="journal article" date="2003" name="Science">
        <title>In-depth view of structure, activity, and evolution of rice chromosome 10.</title>
        <authorList>
            <person name="Yu Y."/>
            <person name="Rambo T."/>
            <person name="Currie J."/>
            <person name="Saski C."/>
            <person name="Kim H.-R."/>
            <person name="Collura K."/>
            <person name="Thompson S."/>
            <person name="Simmons J."/>
            <person name="Yang T.-J."/>
            <person name="Nah G."/>
            <person name="Patel A.J."/>
            <person name="Thurmond S."/>
            <person name="Henry D."/>
            <person name="Oates R."/>
            <person name="Palmer M."/>
            <person name="Pries G."/>
            <person name="Gibson J."/>
            <person name="Anderson H."/>
            <person name="Paradkar M."/>
            <person name="Crane L."/>
            <person name="Dale J."/>
            <person name="Carver M.B."/>
            <person name="Wood T."/>
            <person name="Frisch D."/>
            <person name="Engler F."/>
            <person name="Soderlund C."/>
            <person name="Palmer L.E."/>
            <person name="Teytelman L."/>
            <person name="Nascimento L."/>
            <person name="De la Bastide M."/>
            <person name="Spiegel L."/>
            <person name="Ware D."/>
            <person name="O'Shaughnessy A."/>
            <person name="Dike S."/>
            <person name="Dedhia N."/>
            <person name="Preston R."/>
            <person name="Huang E."/>
            <person name="Ferraro K."/>
            <person name="Kuit K."/>
            <person name="Miller B."/>
            <person name="Zutavern T."/>
            <person name="Katzenberger F."/>
            <person name="Muller S."/>
            <person name="Balija V."/>
            <person name="Martienssen R.A."/>
            <person name="Stein L."/>
            <person name="Minx P."/>
            <person name="Johnson D."/>
            <person name="Cordum H."/>
            <person name="Mardis E."/>
            <person name="Cheng Z."/>
            <person name="Jiang J."/>
            <person name="Wilson R."/>
            <person name="McCombie W.R."/>
            <person name="Wing R.A."/>
            <person name="Yuan Q."/>
            <person name="Ouyang S."/>
            <person name="Liu J."/>
            <person name="Jones K.M."/>
            <person name="Gansberger K."/>
            <person name="Moffat K."/>
            <person name="Hill J."/>
            <person name="Tsitrin T."/>
            <person name="Overton L."/>
            <person name="Bera J."/>
            <person name="Kim M."/>
            <person name="Jin S."/>
            <person name="Tallon L."/>
            <person name="Ciecko A."/>
            <person name="Pai G."/>
            <person name="Van Aken S."/>
            <person name="Utterback T."/>
            <person name="Reidmuller S."/>
            <person name="Bormann J."/>
            <person name="Feldblyum T."/>
            <person name="Hsiao J."/>
            <person name="Zismann V."/>
            <person name="Blunt S."/>
            <person name="de Vazeille A.R."/>
            <person name="Shaffer T."/>
            <person name="Koo H."/>
            <person name="Suh B."/>
            <person name="Yang Q."/>
            <person name="Haas B."/>
            <person name="Peterson J."/>
            <person name="Pertea M."/>
            <person name="Volfovsky N."/>
            <person name="Wortman J."/>
            <person name="White O."/>
            <person name="Salzberg S.L."/>
            <person name="Fraser C.M."/>
            <person name="Buell C.R."/>
            <person name="Messing J."/>
            <person name="Song R."/>
            <person name="Fuks G."/>
            <person name="Llaca V."/>
            <person name="Kovchak S."/>
            <person name="Young S."/>
            <person name="Bowers J.E."/>
            <person name="Paterson A.H."/>
            <person name="Johns M.A."/>
            <person name="Mao L."/>
            <person name="Pan H."/>
            <person name="Dean R.A."/>
        </authorList>
    </citation>
    <scope>NUCLEOTIDE SEQUENCE [LARGE SCALE GENOMIC DNA]</scope>
    <source>
        <strain>cv. Nipponbare</strain>
    </source>
</reference>
<reference key="2">
    <citation type="journal article" date="2005" name="Nature">
        <title>The map-based sequence of the rice genome.</title>
        <authorList>
            <consortium name="International rice genome sequencing project (IRGSP)"/>
        </authorList>
    </citation>
    <scope>NUCLEOTIDE SEQUENCE [LARGE SCALE GENOMIC DNA]</scope>
    <source>
        <strain>cv. Nipponbare</strain>
    </source>
</reference>
<reference key="3">
    <citation type="journal article" date="2008" name="Nucleic Acids Res.">
        <title>The rice annotation project database (RAP-DB): 2008 update.</title>
        <authorList>
            <consortium name="The rice annotation project (RAP)"/>
        </authorList>
    </citation>
    <scope>GENOME REANNOTATION</scope>
    <source>
        <strain>cv. Nipponbare</strain>
    </source>
</reference>
<reference key="4">
    <citation type="journal article" date="2013" name="Rice">
        <title>Improvement of the Oryza sativa Nipponbare reference genome using next generation sequence and optical map data.</title>
        <authorList>
            <person name="Kawahara Y."/>
            <person name="de la Bastide M."/>
            <person name="Hamilton J.P."/>
            <person name="Kanamori H."/>
            <person name="McCombie W.R."/>
            <person name="Ouyang S."/>
            <person name="Schwartz D.C."/>
            <person name="Tanaka T."/>
            <person name="Wu J."/>
            <person name="Zhou S."/>
            <person name="Childs K.L."/>
            <person name="Davidson R.M."/>
            <person name="Lin H."/>
            <person name="Quesada-Ocampo L."/>
            <person name="Vaillancourt B."/>
            <person name="Sakai H."/>
            <person name="Lee S.S."/>
            <person name="Kim J."/>
            <person name="Numa H."/>
            <person name="Itoh T."/>
            <person name="Buell C.R."/>
            <person name="Matsumoto T."/>
        </authorList>
    </citation>
    <scope>GENOME REANNOTATION</scope>
    <source>
        <strain>cv. Nipponbare</strain>
    </source>
</reference>
<reference key="5">
    <citation type="journal article" date="2003" name="Science">
        <title>Collection, mapping, and annotation of over 28,000 cDNA clones from japonica rice.</title>
        <authorList>
            <consortium name="The rice full-length cDNA consortium"/>
        </authorList>
    </citation>
    <scope>NUCLEOTIDE SEQUENCE [LARGE SCALE MRNA]</scope>
    <source>
        <strain>cv. Nipponbare</strain>
    </source>
</reference>
<reference key="6">
    <citation type="journal article" date="2017" name="Plant Cell">
        <title>Rice homeodomain protein WOX11 recruits a histone acetyltransferase complex to establish programs of cell proliferation of crown root meristem.</title>
        <authorList>
            <person name="Zhou S."/>
            <person name="Jiang W."/>
            <person name="Long F."/>
            <person name="Cheng S."/>
            <person name="Yang W."/>
            <person name="Zhao Y."/>
            <person name="Zhou D.X."/>
        </authorList>
    </citation>
    <scope>FUNCTION</scope>
    <scope>CATALYTIC ACTIVITY</scope>
    <scope>INTERACTION WITH ADA2</scope>
    <scope>TISSUE SPECIFICITY</scope>
</reference>
<keyword id="KW-0010">Activator</keyword>
<keyword id="KW-0012">Acyltransferase</keyword>
<keyword id="KW-0103">Bromodomain</keyword>
<keyword id="KW-0156">Chromatin regulator</keyword>
<keyword id="KW-0539">Nucleus</keyword>
<keyword id="KW-1185">Reference proteome</keyword>
<keyword id="KW-0804">Transcription</keyword>
<keyword id="KW-0805">Transcription regulation</keyword>
<keyword id="KW-0808">Transferase</keyword>